<comment type="function">
    <text evidence="3">Catalyzes the NAD-dependent oxidation and subsequent decarboxylation of D-threonate 4-phosphate to produce dihydroxyacetone phosphate (DHAP). Can also use 4-hydroxy-L-threonine 4-phosphate as substrate.</text>
</comment>
<comment type="catalytic activity">
    <reaction evidence="3">
        <text>4-O-phospho-D-threonate + NAD(+) = dihydroxyacetone phosphate + CO2 + NADH</text>
        <dbReference type="Rhea" id="RHEA:52396"/>
        <dbReference type="ChEBI" id="CHEBI:16526"/>
        <dbReference type="ChEBI" id="CHEBI:57540"/>
        <dbReference type="ChEBI" id="CHEBI:57642"/>
        <dbReference type="ChEBI" id="CHEBI:57945"/>
        <dbReference type="ChEBI" id="CHEBI:136590"/>
        <dbReference type="EC" id="1.1.1.408"/>
    </reaction>
</comment>
<comment type="cofactor">
    <cofactor evidence="1">
        <name>a divalent metal cation</name>
        <dbReference type="ChEBI" id="CHEBI:60240"/>
    </cofactor>
    <text evidence="1">Binds 1 divalent metal cation per subunit.</text>
</comment>
<comment type="biophysicochemical properties">
    <kinetics>
        <KM evidence="3">0.12 mM for D-threonate 4-phosphate</KM>
        <KM evidence="3">0.2 mM for 4-hydroxy-L-threonine 4-phosphate</KM>
        <text evidence="3">kcat is 3.4 sec(-1) with D-threonate 4-phosphate as substrate. kcat is 0.35 sec(-1) with 4-hydroxy-L-threonine 4-phosphate as substrate.</text>
    </kinetics>
</comment>
<comment type="subunit">
    <text evidence="2">Homodimer.</text>
</comment>
<comment type="similarity">
    <text evidence="5">Belongs to the PdxA family. PdxA2 subfamily.</text>
</comment>
<protein>
    <recommendedName>
        <fullName evidence="4">D-threonate 4-phosphate dehydrogenase</fullName>
        <ecNumber evidence="3">1.1.1.408</ecNumber>
    </recommendedName>
</protein>
<evidence type="ECO:0000250" key="1">
    <source>
        <dbReference type="UniProtKB" id="P19624"/>
    </source>
</evidence>
<evidence type="ECO:0000250" key="2">
    <source>
        <dbReference type="UniProtKB" id="P58718"/>
    </source>
</evidence>
<evidence type="ECO:0000269" key="3">
    <source>
    </source>
</evidence>
<evidence type="ECO:0000303" key="4">
    <source>
    </source>
</evidence>
<evidence type="ECO:0000305" key="5"/>
<evidence type="ECO:0000312" key="6">
    <source>
        <dbReference type="EMBL" id="CAJ95119.1"/>
    </source>
</evidence>
<feature type="chain" id="PRO_0000439816" description="D-threonate 4-phosphate dehydrogenase">
    <location>
        <begin position="1"/>
        <end position="333"/>
    </location>
</feature>
<feature type="binding site" evidence="1">
    <location>
        <position position="140"/>
    </location>
    <ligand>
        <name>substrate</name>
    </ligand>
</feature>
<feature type="binding site" evidence="1">
    <location>
        <position position="141"/>
    </location>
    <ligand>
        <name>substrate</name>
    </ligand>
</feature>
<feature type="binding site" evidence="1">
    <location>
        <position position="170"/>
    </location>
    <ligand>
        <name>a divalent metal cation</name>
        <dbReference type="ChEBI" id="CHEBI:60240"/>
        <note>ligand shared between dimeric partners</note>
    </ligand>
</feature>
<feature type="binding site" evidence="1">
    <location>
        <position position="214"/>
    </location>
    <ligand>
        <name>a divalent metal cation</name>
        <dbReference type="ChEBI" id="CHEBI:60240"/>
        <note>ligand shared between dimeric partners</note>
    </ligand>
</feature>
<feature type="binding site" evidence="1">
    <location>
        <position position="270"/>
    </location>
    <ligand>
        <name>a divalent metal cation</name>
        <dbReference type="ChEBI" id="CHEBI:60240"/>
        <note>ligand shared between dimeric partners</note>
    </ligand>
</feature>
<feature type="binding site" evidence="1">
    <location>
        <position position="278"/>
    </location>
    <ligand>
        <name>substrate</name>
    </ligand>
</feature>
<feature type="binding site" evidence="1">
    <location>
        <position position="287"/>
    </location>
    <ligand>
        <name>substrate</name>
    </ligand>
</feature>
<feature type="binding site" evidence="1">
    <location>
        <position position="296"/>
    </location>
    <ligand>
        <name>substrate</name>
    </ligand>
</feature>
<reference key="1">
    <citation type="journal article" date="2006" name="Nat. Biotechnol.">
        <title>Genome sequence of the bioplastic-producing 'Knallgas' bacterium Ralstonia eutropha H16.</title>
        <authorList>
            <person name="Pohlmann A."/>
            <person name="Fricke W.F."/>
            <person name="Reinecke F."/>
            <person name="Kusian B."/>
            <person name="Liesegang H."/>
            <person name="Cramm R."/>
            <person name="Eitinger T."/>
            <person name="Ewering C."/>
            <person name="Poetter M."/>
            <person name="Schwartz E."/>
            <person name="Strittmatter A."/>
            <person name="Voss I."/>
            <person name="Gottschalk G."/>
            <person name="Steinbuechel A."/>
            <person name="Friedrich B."/>
            <person name="Bowien B."/>
        </authorList>
    </citation>
    <scope>NUCLEOTIDE SEQUENCE [LARGE SCALE GENOMIC DNA]</scope>
    <source>
        <strain>ATCC 17699 / DSM 428 / KCTC 22496 / NCIMB 10442 / H16 / Stanier 337</strain>
    </source>
</reference>
<reference key="2">
    <citation type="journal article" date="2016" name="Proc. Natl. Acad. Sci. U.S.A.">
        <title>Assignment of function to a domain of unknown function: DUF1537 is a new kinase family in catabolic pathways for acid sugars.</title>
        <authorList>
            <person name="Zhang X."/>
            <person name="Carter M.S."/>
            <person name="Vetting M.W."/>
            <person name="San Francisco B."/>
            <person name="Zhao S."/>
            <person name="Al-Obaidi N.F."/>
            <person name="Solbiati J.O."/>
            <person name="Thiaville J.J."/>
            <person name="de Crecy-Lagard V."/>
            <person name="Jacobson M.P."/>
            <person name="Almo S.C."/>
            <person name="Gerlt J.A."/>
        </authorList>
    </citation>
    <scope>FUNCTION</scope>
    <scope>CATALYTIC ACTIVITY</scope>
    <scope>BIOPHYSICOCHEMICAL PROPERTIES</scope>
    <source>
        <strain>ATCC 17699 / DSM 428 / KCTC 22496 / NCIMB 10442 / H16 / Stanier 337</strain>
    </source>
</reference>
<sequence>MSDYLPVIGITMGDATGIGPEVIVKSLAHDSVRAQCRPLVIGDVRRLEVAGRLVGSPLKLRAIQAPEEARFQSGTIDCIDLGLIPEGLPFGKLSAVAGDAAFRYIERAVALTRDEKIDAICTAPLNKEALHAGGHKFPGHTEMLAYLTGTPEVSMMLVAPKLRVIHVTTHIGLLDAIRKIEPGLVQRTIERGHQTLQRAGIAAPRIGVCGINPHAGENGLFGHGEEEEKIIPAVEALRARGRDVEGPLPADTLFYRAGRGDFDLVVAMYHDQGHGPVKVLGLEAGVNITVGLPVIRTSVDHGTAFDIAGKGIADERSLLEALRQGAELATRRA</sequence>
<gene>
    <name evidence="4" type="primary">pdxA2</name>
    <name evidence="6" type="ordered locus">H16_B0319</name>
</gene>
<name>PDXA2_CUPNH</name>
<dbReference type="EC" id="1.1.1.408" evidence="3"/>
<dbReference type="EMBL" id="AM260480">
    <property type="protein sequence ID" value="CAJ95119.1"/>
    <property type="molecule type" value="Genomic_DNA"/>
</dbReference>
<dbReference type="RefSeq" id="WP_011616489.1">
    <property type="nucleotide sequence ID" value="NC_008314.1"/>
</dbReference>
<dbReference type="SMR" id="Q0K4F5"/>
<dbReference type="STRING" id="381666.H16_B0319"/>
<dbReference type="KEGG" id="reh:H16_B0319"/>
<dbReference type="eggNOG" id="COG1995">
    <property type="taxonomic scope" value="Bacteria"/>
</dbReference>
<dbReference type="HOGENOM" id="CLU_040168_0_1_4"/>
<dbReference type="OrthoDB" id="9801783at2"/>
<dbReference type="BRENDA" id="1.1.1.408">
    <property type="organism ID" value="231"/>
</dbReference>
<dbReference type="BRENDA" id="1.1.1.409">
    <property type="organism ID" value="231"/>
</dbReference>
<dbReference type="Proteomes" id="UP000008210">
    <property type="component" value="Chromosome 2"/>
</dbReference>
<dbReference type="GO" id="GO:0046872">
    <property type="term" value="F:metal ion binding"/>
    <property type="evidence" value="ECO:0007669"/>
    <property type="project" value="UniProtKB-KW"/>
</dbReference>
<dbReference type="GO" id="GO:0051287">
    <property type="term" value="F:NAD binding"/>
    <property type="evidence" value="ECO:0007669"/>
    <property type="project" value="InterPro"/>
</dbReference>
<dbReference type="GO" id="GO:0016491">
    <property type="term" value="F:oxidoreductase activity"/>
    <property type="evidence" value="ECO:0007669"/>
    <property type="project" value="UniProtKB-KW"/>
</dbReference>
<dbReference type="Gene3D" id="3.40.718.10">
    <property type="entry name" value="Isopropylmalate Dehydrogenase"/>
    <property type="match status" value="1"/>
</dbReference>
<dbReference type="InterPro" id="IPR005255">
    <property type="entry name" value="PdxA_fam"/>
</dbReference>
<dbReference type="NCBIfam" id="TIGR00557">
    <property type="entry name" value="pdxA"/>
    <property type="match status" value="1"/>
</dbReference>
<dbReference type="PANTHER" id="PTHR30004">
    <property type="entry name" value="4-HYDROXYTHREONINE-4-PHOSPHATE DEHYDROGENASE"/>
    <property type="match status" value="1"/>
</dbReference>
<dbReference type="PANTHER" id="PTHR30004:SF6">
    <property type="entry name" value="D-THREONATE 4-PHOSPHATE DEHYDROGENASE"/>
    <property type="match status" value="1"/>
</dbReference>
<dbReference type="Pfam" id="PF04166">
    <property type="entry name" value="PdxA"/>
    <property type="match status" value="1"/>
</dbReference>
<dbReference type="SUPFAM" id="SSF53659">
    <property type="entry name" value="Isocitrate/Isopropylmalate dehydrogenase-like"/>
    <property type="match status" value="1"/>
</dbReference>
<organism>
    <name type="scientific">Cupriavidus necator (strain ATCC 17699 / DSM 428 / KCTC 22496 / NCIMB 10442 / H16 / Stanier 337)</name>
    <name type="common">Ralstonia eutropha</name>
    <dbReference type="NCBI Taxonomy" id="381666"/>
    <lineage>
        <taxon>Bacteria</taxon>
        <taxon>Pseudomonadati</taxon>
        <taxon>Pseudomonadota</taxon>
        <taxon>Betaproteobacteria</taxon>
        <taxon>Burkholderiales</taxon>
        <taxon>Burkholderiaceae</taxon>
        <taxon>Cupriavidus</taxon>
    </lineage>
</organism>
<keyword id="KW-0119">Carbohydrate metabolism</keyword>
<keyword id="KW-0479">Metal-binding</keyword>
<keyword id="KW-0520">NAD</keyword>
<keyword id="KW-0560">Oxidoreductase</keyword>
<keyword id="KW-1185">Reference proteome</keyword>
<proteinExistence type="evidence at protein level"/>
<accession>Q0K4F5</accession>